<organism>
    <name type="scientific">Oryza sativa subsp. indica</name>
    <name type="common">Rice</name>
    <dbReference type="NCBI Taxonomy" id="39946"/>
    <lineage>
        <taxon>Eukaryota</taxon>
        <taxon>Viridiplantae</taxon>
        <taxon>Streptophyta</taxon>
        <taxon>Embryophyta</taxon>
        <taxon>Tracheophyta</taxon>
        <taxon>Spermatophyta</taxon>
        <taxon>Magnoliopsida</taxon>
        <taxon>Liliopsida</taxon>
        <taxon>Poales</taxon>
        <taxon>Poaceae</taxon>
        <taxon>BOP clade</taxon>
        <taxon>Oryzoideae</taxon>
        <taxon>Oryzeae</taxon>
        <taxon>Oryzinae</taxon>
        <taxon>Oryza</taxon>
        <taxon>Oryza sativa</taxon>
    </lineage>
</organism>
<reference key="1">
    <citation type="journal article" date="2005" name="PLoS Biol.">
        <title>The genomes of Oryza sativa: a history of duplications.</title>
        <authorList>
            <person name="Yu J."/>
            <person name="Wang J."/>
            <person name="Lin W."/>
            <person name="Li S."/>
            <person name="Li H."/>
            <person name="Zhou J."/>
            <person name="Ni P."/>
            <person name="Dong W."/>
            <person name="Hu S."/>
            <person name="Zeng C."/>
            <person name="Zhang J."/>
            <person name="Zhang Y."/>
            <person name="Li R."/>
            <person name="Xu Z."/>
            <person name="Li S."/>
            <person name="Li X."/>
            <person name="Zheng H."/>
            <person name="Cong L."/>
            <person name="Lin L."/>
            <person name="Yin J."/>
            <person name="Geng J."/>
            <person name="Li G."/>
            <person name="Shi J."/>
            <person name="Liu J."/>
            <person name="Lv H."/>
            <person name="Li J."/>
            <person name="Wang J."/>
            <person name="Deng Y."/>
            <person name="Ran L."/>
            <person name="Shi X."/>
            <person name="Wang X."/>
            <person name="Wu Q."/>
            <person name="Li C."/>
            <person name="Ren X."/>
            <person name="Wang J."/>
            <person name="Wang X."/>
            <person name="Li D."/>
            <person name="Liu D."/>
            <person name="Zhang X."/>
            <person name="Ji Z."/>
            <person name="Zhao W."/>
            <person name="Sun Y."/>
            <person name="Zhang Z."/>
            <person name="Bao J."/>
            <person name="Han Y."/>
            <person name="Dong L."/>
            <person name="Ji J."/>
            <person name="Chen P."/>
            <person name="Wu S."/>
            <person name="Liu J."/>
            <person name="Xiao Y."/>
            <person name="Bu D."/>
            <person name="Tan J."/>
            <person name="Yang L."/>
            <person name="Ye C."/>
            <person name="Zhang J."/>
            <person name="Xu J."/>
            <person name="Zhou Y."/>
            <person name="Yu Y."/>
            <person name="Zhang B."/>
            <person name="Zhuang S."/>
            <person name="Wei H."/>
            <person name="Liu B."/>
            <person name="Lei M."/>
            <person name="Yu H."/>
            <person name="Li Y."/>
            <person name="Xu H."/>
            <person name="Wei S."/>
            <person name="He X."/>
            <person name="Fang L."/>
            <person name="Zhang Z."/>
            <person name="Zhang Y."/>
            <person name="Huang X."/>
            <person name="Su Z."/>
            <person name="Tong W."/>
            <person name="Li J."/>
            <person name="Tong Z."/>
            <person name="Li S."/>
            <person name="Ye J."/>
            <person name="Wang L."/>
            <person name="Fang L."/>
            <person name="Lei T."/>
            <person name="Chen C.-S."/>
            <person name="Chen H.-C."/>
            <person name="Xu Z."/>
            <person name="Li H."/>
            <person name="Huang H."/>
            <person name="Zhang F."/>
            <person name="Xu H."/>
            <person name="Li N."/>
            <person name="Zhao C."/>
            <person name="Li S."/>
            <person name="Dong L."/>
            <person name="Huang Y."/>
            <person name="Li L."/>
            <person name="Xi Y."/>
            <person name="Qi Q."/>
            <person name="Li W."/>
            <person name="Zhang B."/>
            <person name="Hu W."/>
            <person name="Zhang Y."/>
            <person name="Tian X."/>
            <person name="Jiao Y."/>
            <person name="Liang X."/>
            <person name="Jin J."/>
            <person name="Gao L."/>
            <person name="Zheng W."/>
            <person name="Hao B."/>
            <person name="Liu S.-M."/>
            <person name="Wang W."/>
            <person name="Yuan L."/>
            <person name="Cao M."/>
            <person name="McDermott J."/>
            <person name="Samudrala R."/>
            <person name="Wang J."/>
            <person name="Wong G.K.-S."/>
            <person name="Yang H."/>
        </authorList>
    </citation>
    <scope>NUCLEOTIDE SEQUENCE [LARGE SCALE GENOMIC DNA]</scope>
    <source>
        <strain>cv. 93-11</strain>
    </source>
</reference>
<protein>
    <recommendedName>
        <fullName>Dehydration-responsive element-binding protein 1G</fullName>
        <shortName>Protein DREB1G</shortName>
    </recommendedName>
</protein>
<keyword id="KW-0010">Activator</keyword>
<keyword id="KW-0238">DNA-binding</keyword>
<keyword id="KW-0539">Nucleus</keyword>
<keyword id="KW-1185">Reference proteome</keyword>
<keyword id="KW-0346">Stress response</keyword>
<keyword id="KW-0804">Transcription</keyword>
<keyword id="KW-0805">Transcription regulation</keyword>
<feature type="chain" id="PRO_0000323036" description="Dehydration-responsive element-binding protein 1G">
    <location>
        <begin position="1"/>
        <end position="224"/>
    </location>
</feature>
<feature type="DNA-binding region" description="AP2/ERF" evidence="2">
    <location>
        <begin position="54"/>
        <end position="111"/>
    </location>
</feature>
<feature type="region of interest" description="Disordered" evidence="3">
    <location>
        <begin position="1"/>
        <end position="46"/>
    </location>
</feature>
<feature type="compositionally biased region" description="Polar residues" evidence="3">
    <location>
        <begin position="1"/>
        <end position="16"/>
    </location>
</feature>
<sequence length="224" mass="23963">MDVSAALSSDYSSGTPSPVAADADDGSSAYMTVSSAPPKRRAGRTKFKETRHPVFKGVRRRNPGRWVCEVREPHGKQRIWLGTFETAEMAARAHDVAALALRGRAACLNFADSPRRLRVPPIGASHDDIRRAAAEAAEAFRPPPDESNAATEVAAAASGATNSNAEQFASHPYYEVMDDGLDLGMQGYLDMAQGMLIDPPPMACDPAVGGGEDDNDGEVQLWSY</sequence>
<gene>
    <name type="primary">DREB1G</name>
    <name type="synonym">ERF25</name>
    <name type="ORF">OsI_008292</name>
</gene>
<evidence type="ECO:0000250" key="1"/>
<evidence type="ECO:0000255" key="2">
    <source>
        <dbReference type="PROSITE-ProRule" id="PRU00366"/>
    </source>
</evidence>
<evidence type="ECO:0000256" key="3">
    <source>
        <dbReference type="SAM" id="MobiDB-lite"/>
    </source>
</evidence>
<evidence type="ECO:0000305" key="4"/>
<name>DRE1G_ORYSI</name>
<dbReference type="EMBL" id="CM000127">
    <property type="protein sequence ID" value="EAY87059.1"/>
    <property type="molecule type" value="Genomic_DNA"/>
</dbReference>
<dbReference type="SMR" id="A2X899"/>
<dbReference type="STRING" id="39946.A2X899"/>
<dbReference type="EnsemblPlants" id="BGIOSGA008804-TA">
    <property type="protein sequence ID" value="BGIOSGA008804-PA"/>
    <property type="gene ID" value="BGIOSGA008804"/>
</dbReference>
<dbReference type="EnsemblPlants" id="OsGoSa_02g0028690.01">
    <property type="protein sequence ID" value="OsGoSa_02g0028690.01"/>
    <property type="gene ID" value="OsGoSa_02g0028690"/>
</dbReference>
<dbReference type="EnsemblPlants" id="OsIR64_02g0028350.01">
    <property type="protein sequence ID" value="OsIR64_02g0028350.01"/>
    <property type="gene ID" value="OsIR64_02g0028350"/>
</dbReference>
<dbReference type="EnsemblPlants" id="OsKYG_02g0028400.01">
    <property type="protein sequence ID" value="OsKYG_02g0028400.01"/>
    <property type="gene ID" value="OsKYG_02g0028400"/>
</dbReference>
<dbReference type="EnsemblPlants" id="OsLaMu_02g0028250.01">
    <property type="protein sequence ID" value="OsLaMu_02g0028250.01"/>
    <property type="gene ID" value="OsLaMu_02g0028250"/>
</dbReference>
<dbReference type="EnsemblPlants" id="OsLima_02g0028690.01">
    <property type="protein sequence ID" value="OsLima_02g0028690.01"/>
    <property type="gene ID" value="OsLima_02g0028690"/>
</dbReference>
<dbReference type="EnsemblPlants" id="OsLiXu_02g0028560.01">
    <property type="protein sequence ID" value="OsLiXu_02g0028560.01"/>
    <property type="gene ID" value="OsLiXu_02g0028560"/>
</dbReference>
<dbReference type="EnsemblPlants" id="OsMH63_02G028930_01">
    <property type="protein sequence ID" value="OsMH63_02G028930_01"/>
    <property type="gene ID" value="OsMH63_02G028930"/>
</dbReference>
<dbReference type="EnsemblPlants" id="OsPr106_02g0028540.01">
    <property type="protein sequence ID" value="OsPr106_02g0028540.01"/>
    <property type="gene ID" value="OsPr106_02g0028540"/>
</dbReference>
<dbReference type="EnsemblPlants" id="OsZS97_02G028280_01">
    <property type="protein sequence ID" value="OsZS97_02G028280_01"/>
    <property type="gene ID" value="OsZS97_02G028280"/>
</dbReference>
<dbReference type="Gramene" id="BGIOSGA008804-TA">
    <property type="protein sequence ID" value="BGIOSGA008804-PA"/>
    <property type="gene ID" value="BGIOSGA008804"/>
</dbReference>
<dbReference type="Gramene" id="OsGoSa_02g0028690.01">
    <property type="protein sequence ID" value="OsGoSa_02g0028690.01"/>
    <property type="gene ID" value="OsGoSa_02g0028690"/>
</dbReference>
<dbReference type="Gramene" id="OsIR64_02g0028350.01">
    <property type="protein sequence ID" value="OsIR64_02g0028350.01"/>
    <property type="gene ID" value="OsIR64_02g0028350"/>
</dbReference>
<dbReference type="Gramene" id="OsKYG_02g0028400.01">
    <property type="protein sequence ID" value="OsKYG_02g0028400.01"/>
    <property type="gene ID" value="OsKYG_02g0028400"/>
</dbReference>
<dbReference type="Gramene" id="OsLaMu_02g0028250.01">
    <property type="protein sequence ID" value="OsLaMu_02g0028250.01"/>
    <property type="gene ID" value="OsLaMu_02g0028250"/>
</dbReference>
<dbReference type="Gramene" id="OsLima_02g0028690.01">
    <property type="protein sequence ID" value="OsLima_02g0028690.01"/>
    <property type="gene ID" value="OsLima_02g0028690"/>
</dbReference>
<dbReference type="Gramene" id="OsLiXu_02g0028560.01">
    <property type="protein sequence ID" value="OsLiXu_02g0028560.01"/>
    <property type="gene ID" value="OsLiXu_02g0028560"/>
</dbReference>
<dbReference type="Gramene" id="OsMH63_02G028930_01">
    <property type="protein sequence ID" value="OsMH63_02G028930_01"/>
    <property type="gene ID" value="OsMH63_02G028930"/>
</dbReference>
<dbReference type="Gramene" id="OsPr106_02g0028540.01">
    <property type="protein sequence ID" value="OsPr106_02g0028540.01"/>
    <property type="gene ID" value="OsPr106_02g0028540"/>
</dbReference>
<dbReference type="Gramene" id="OsZS97_02G028280_01">
    <property type="protein sequence ID" value="OsZS97_02G028280_01"/>
    <property type="gene ID" value="OsZS97_02G028280"/>
</dbReference>
<dbReference type="HOGENOM" id="CLU_063331_1_0_1"/>
<dbReference type="OMA" id="ADQFRPP"/>
<dbReference type="OrthoDB" id="676764at2759"/>
<dbReference type="Proteomes" id="UP000007015">
    <property type="component" value="Chromosome 2"/>
</dbReference>
<dbReference type="GO" id="GO:0005634">
    <property type="term" value="C:nucleus"/>
    <property type="evidence" value="ECO:0007669"/>
    <property type="project" value="UniProtKB-SubCell"/>
</dbReference>
<dbReference type="GO" id="GO:0003677">
    <property type="term" value="F:DNA binding"/>
    <property type="evidence" value="ECO:0007669"/>
    <property type="project" value="UniProtKB-KW"/>
</dbReference>
<dbReference type="GO" id="GO:0003700">
    <property type="term" value="F:DNA-binding transcription factor activity"/>
    <property type="evidence" value="ECO:0007669"/>
    <property type="project" value="InterPro"/>
</dbReference>
<dbReference type="CDD" id="cd00018">
    <property type="entry name" value="AP2"/>
    <property type="match status" value="1"/>
</dbReference>
<dbReference type="FunFam" id="3.30.730.10:FF:000001">
    <property type="entry name" value="Ethylene-responsive transcription factor 2"/>
    <property type="match status" value="1"/>
</dbReference>
<dbReference type="Gene3D" id="3.30.730.10">
    <property type="entry name" value="AP2/ERF domain"/>
    <property type="match status" value="1"/>
</dbReference>
<dbReference type="InterPro" id="IPR001471">
    <property type="entry name" value="AP2/ERF_dom"/>
</dbReference>
<dbReference type="InterPro" id="IPR036955">
    <property type="entry name" value="AP2/ERF_dom_sf"/>
</dbReference>
<dbReference type="InterPro" id="IPR016177">
    <property type="entry name" value="DNA-bd_dom_sf"/>
</dbReference>
<dbReference type="InterPro" id="IPR045277">
    <property type="entry name" value="DRE1A-I"/>
</dbReference>
<dbReference type="PANTHER" id="PTHR31839">
    <property type="entry name" value="DEHYDRATION-RESPONSIVE ELEMENT-BINDING PROTEIN 1D"/>
    <property type="match status" value="1"/>
</dbReference>
<dbReference type="PANTHER" id="PTHR31839:SF2">
    <property type="entry name" value="DEHYDRATION-RESPONSIVE ELEMENT-BINDING PROTEIN 1D"/>
    <property type="match status" value="1"/>
</dbReference>
<dbReference type="Pfam" id="PF00847">
    <property type="entry name" value="AP2"/>
    <property type="match status" value="1"/>
</dbReference>
<dbReference type="PRINTS" id="PR00367">
    <property type="entry name" value="ETHRSPELEMNT"/>
</dbReference>
<dbReference type="SMART" id="SM00380">
    <property type="entry name" value="AP2"/>
    <property type="match status" value="1"/>
</dbReference>
<dbReference type="SUPFAM" id="SSF54171">
    <property type="entry name" value="DNA-binding domain"/>
    <property type="match status" value="1"/>
</dbReference>
<dbReference type="PROSITE" id="PS51032">
    <property type="entry name" value="AP2_ERF"/>
    <property type="match status" value="1"/>
</dbReference>
<accession>A2X899</accession>
<proteinExistence type="inferred from homology"/>
<comment type="function">
    <text evidence="1">Transcriptional activator that binds specifically to the DNA sequence 5'-[AG]CCGAC-3'. Binding to the C-repeat/DRE element mediates high salinity- and dehydration-inducible transcription (By similarity).</text>
</comment>
<comment type="subcellular location">
    <subcellularLocation>
        <location evidence="4">Nucleus</location>
    </subcellularLocation>
</comment>
<comment type="similarity">
    <text evidence="4">Belongs to the AP2/ERF transcription factor family. ERF subfamily.</text>
</comment>